<reference key="1">
    <citation type="submission" date="2005-08" db="EMBL/GenBank/DDBJ databases">
        <title>Complete sequence of Synechococcus sp. CC9902.</title>
        <authorList>
            <person name="Copeland A."/>
            <person name="Lucas S."/>
            <person name="Lapidus A."/>
            <person name="Barry K."/>
            <person name="Detter J.C."/>
            <person name="Glavina T."/>
            <person name="Hammon N."/>
            <person name="Israni S."/>
            <person name="Pitluck S."/>
            <person name="Martinez M."/>
            <person name="Schmutz J."/>
            <person name="Larimer F."/>
            <person name="Land M."/>
            <person name="Kyrpides N."/>
            <person name="Ivanova N."/>
            <person name="Richardson P."/>
        </authorList>
    </citation>
    <scope>NUCLEOTIDE SEQUENCE [LARGE SCALE GENOMIC DNA]</scope>
    <source>
        <strain>CC9902</strain>
    </source>
</reference>
<sequence length="316" mass="33433">MAGFDPTLQPSDDRGHLLTEQSNPRSRRLDQLATNDLVNLFVEEDRRPQEAVAEASEAIAAAVDAISKRLSSGGRLFYLGAGTSGRLGVLDAAECPPTFCSDPELVQGVLAGGTPALLRSSEGLEDLEQAGRDDLDRHGFRQGDCLVGIAAGGTTPYVRGGLSYACSIGALAIAMACVPKDQAPLPCDIDIRLLTGPELLTGSTRLKAGTATKMALNILSTTVMVRLGKVYGNRMVDVAASNSKLVDRSLRILRDLIGVEREEGLALLALSDGSVKLALLMKAANLSKDQARSVLERHDQQLRPSLETCGATLAQL</sequence>
<dbReference type="EC" id="4.2.1.126" evidence="1"/>
<dbReference type="EMBL" id="CP000097">
    <property type="protein sequence ID" value="ABB26059.1"/>
    <property type="molecule type" value="Genomic_DNA"/>
</dbReference>
<dbReference type="RefSeq" id="WP_011359889.1">
    <property type="nucleotide sequence ID" value="NC_007513.1"/>
</dbReference>
<dbReference type="SMR" id="Q3AXW8"/>
<dbReference type="STRING" id="316279.Syncc9902_1095"/>
<dbReference type="KEGG" id="sye:Syncc9902_1095"/>
<dbReference type="eggNOG" id="COG2103">
    <property type="taxonomic scope" value="Bacteria"/>
</dbReference>
<dbReference type="HOGENOM" id="CLU_049049_1_1_3"/>
<dbReference type="OrthoDB" id="9813395at2"/>
<dbReference type="UniPathway" id="UPA00342"/>
<dbReference type="Proteomes" id="UP000002712">
    <property type="component" value="Chromosome"/>
</dbReference>
<dbReference type="GO" id="GO:0097367">
    <property type="term" value="F:carbohydrate derivative binding"/>
    <property type="evidence" value="ECO:0007669"/>
    <property type="project" value="InterPro"/>
</dbReference>
<dbReference type="GO" id="GO:0016835">
    <property type="term" value="F:carbon-oxygen lyase activity"/>
    <property type="evidence" value="ECO:0007669"/>
    <property type="project" value="UniProtKB-UniRule"/>
</dbReference>
<dbReference type="GO" id="GO:0016803">
    <property type="term" value="F:ether hydrolase activity"/>
    <property type="evidence" value="ECO:0007669"/>
    <property type="project" value="TreeGrafter"/>
</dbReference>
<dbReference type="GO" id="GO:0046348">
    <property type="term" value="P:amino sugar catabolic process"/>
    <property type="evidence" value="ECO:0007669"/>
    <property type="project" value="InterPro"/>
</dbReference>
<dbReference type="GO" id="GO:0097173">
    <property type="term" value="P:N-acetylmuramic acid catabolic process"/>
    <property type="evidence" value="ECO:0007669"/>
    <property type="project" value="UniProtKB-UniPathway"/>
</dbReference>
<dbReference type="GO" id="GO:0009254">
    <property type="term" value="P:peptidoglycan turnover"/>
    <property type="evidence" value="ECO:0007669"/>
    <property type="project" value="TreeGrafter"/>
</dbReference>
<dbReference type="CDD" id="cd05007">
    <property type="entry name" value="SIS_Etherase"/>
    <property type="match status" value="1"/>
</dbReference>
<dbReference type="FunFam" id="3.40.50.10490:FF:000014">
    <property type="entry name" value="N-acetylmuramic acid 6-phosphate etherase"/>
    <property type="match status" value="1"/>
</dbReference>
<dbReference type="Gene3D" id="1.10.8.1080">
    <property type="match status" value="1"/>
</dbReference>
<dbReference type="Gene3D" id="3.40.50.10490">
    <property type="entry name" value="Glucose-6-phosphate isomerase like protein, domain 1"/>
    <property type="match status" value="1"/>
</dbReference>
<dbReference type="HAMAP" id="MF_00068">
    <property type="entry name" value="MurQ"/>
    <property type="match status" value="1"/>
</dbReference>
<dbReference type="InterPro" id="IPR005488">
    <property type="entry name" value="Etherase_MurQ"/>
</dbReference>
<dbReference type="InterPro" id="IPR005486">
    <property type="entry name" value="Glucokinase_regulatory_CS"/>
</dbReference>
<dbReference type="InterPro" id="IPR040190">
    <property type="entry name" value="MURQ/GCKR"/>
</dbReference>
<dbReference type="InterPro" id="IPR001347">
    <property type="entry name" value="SIS_dom"/>
</dbReference>
<dbReference type="InterPro" id="IPR046348">
    <property type="entry name" value="SIS_dom_sf"/>
</dbReference>
<dbReference type="NCBIfam" id="TIGR00274">
    <property type="entry name" value="N-acetylmuramic acid 6-phosphate etherase"/>
    <property type="match status" value="1"/>
</dbReference>
<dbReference type="NCBIfam" id="NF003915">
    <property type="entry name" value="PRK05441.1"/>
    <property type="match status" value="1"/>
</dbReference>
<dbReference type="NCBIfam" id="NF009222">
    <property type="entry name" value="PRK12570.1"/>
    <property type="match status" value="1"/>
</dbReference>
<dbReference type="PANTHER" id="PTHR10088">
    <property type="entry name" value="GLUCOKINASE REGULATORY PROTEIN"/>
    <property type="match status" value="1"/>
</dbReference>
<dbReference type="PANTHER" id="PTHR10088:SF4">
    <property type="entry name" value="GLUCOKINASE REGULATORY PROTEIN"/>
    <property type="match status" value="1"/>
</dbReference>
<dbReference type="Pfam" id="PF22645">
    <property type="entry name" value="GKRP_SIS_N"/>
    <property type="match status" value="1"/>
</dbReference>
<dbReference type="SUPFAM" id="SSF53697">
    <property type="entry name" value="SIS domain"/>
    <property type="match status" value="1"/>
</dbReference>
<dbReference type="PROSITE" id="PS01272">
    <property type="entry name" value="GCKR"/>
    <property type="match status" value="1"/>
</dbReference>
<dbReference type="PROSITE" id="PS51464">
    <property type="entry name" value="SIS"/>
    <property type="match status" value="1"/>
</dbReference>
<proteinExistence type="inferred from homology"/>
<accession>Q3AXW8</accession>
<feature type="chain" id="PRO_0000249672" description="N-acetylmuramic acid 6-phosphate etherase">
    <location>
        <begin position="1"/>
        <end position="316"/>
    </location>
</feature>
<feature type="domain" description="SIS" evidence="1">
    <location>
        <begin position="66"/>
        <end position="229"/>
    </location>
</feature>
<feature type="region of interest" description="Disordered" evidence="2">
    <location>
        <begin position="1"/>
        <end position="23"/>
    </location>
</feature>
<feature type="active site" description="Proton donor" evidence="1">
    <location>
        <position position="94"/>
    </location>
</feature>
<feature type="active site" evidence="1">
    <location>
        <position position="125"/>
    </location>
</feature>
<organism>
    <name type="scientific">Synechococcus sp. (strain CC9902)</name>
    <dbReference type="NCBI Taxonomy" id="316279"/>
    <lineage>
        <taxon>Bacteria</taxon>
        <taxon>Bacillati</taxon>
        <taxon>Cyanobacteriota</taxon>
        <taxon>Cyanophyceae</taxon>
        <taxon>Synechococcales</taxon>
        <taxon>Synechococcaceae</taxon>
        <taxon>Synechococcus</taxon>
    </lineage>
</organism>
<name>MURQ_SYNS9</name>
<keyword id="KW-0119">Carbohydrate metabolism</keyword>
<keyword id="KW-0456">Lyase</keyword>
<keyword id="KW-1185">Reference proteome</keyword>
<comment type="function">
    <text evidence="1">Specifically catalyzes the cleavage of the D-lactyl ether substituent of MurNAc 6-phosphate, producing GlcNAc 6-phosphate and D-lactate.</text>
</comment>
<comment type="catalytic activity">
    <reaction evidence="1">
        <text>N-acetyl-D-muramate 6-phosphate + H2O = N-acetyl-D-glucosamine 6-phosphate + (R)-lactate</text>
        <dbReference type="Rhea" id="RHEA:26410"/>
        <dbReference type="ChEBI" id="CHEBI:15377"/>
        <dbReference type="ChEBI" id="CHEBI:16004"/>
        <dbReference type="ChEBI" id="CHEBI:57513"/>
        <dbReference type="ChEBI" id="CHEBI:58722"/>
        <dbReference type="EC" id="4.2.1.126"/>
    </reaction>
</comment>
<comment type="pathway">
    <text evidence="1">Amino-sugar metabolism; N-acetylmuramate degradation.</text>
</comment>
<comment type="subunit">
    <text evidence="1">Homodimer.</text>
</comment>
<comment type="miscellaneous">
    <text evidence="1">A lyase-type mechanism (elimination/hydration) is suggested for the cleavage of the lactyl ether bond of MurNAc 6-phosphate, with the formation of an alpha,beta-unsaturated aldehyde intermediate with (E)-stereochemistry, followed by the syn addition of water to give product.</text>
</comment>
<comment type="similarity">
    <text evidence="1">Belongs to the GCKR-like family. MurNAc-6-P etherase subfamily.</text>
</comment>
<evidence type="ECO:0000255" key="1">
    <source>
        <dbReference type="HAMAP-Rule" id="MF_00068"/>
    </source>
</evidence>
<evidence type="ECO:0000256" key="2">
    <source>
        <dbReference type="SAM" id="MobiDB-lite"/>
    </source>
</evidence>
<gene>
    <name evidence="1" type="primary">murQ</name>
    <name type="ordered locus">Syncc9902_1095</name>
</gene>
<protein>
    <recommendedName>
        <fullName evidence="1">N-acetylmuramic acid 6-phosphate etherase</fullName>
        <shortName evidence="1">MurNAc-6-P etherase</shortName>
        <ecNumber evidence="1">4.2.1.126</ecNumber>
    </recommendedName>
    <alternativeName>
        <fullName evidence="1">N-acetylmuramic acid 6-phosphate hydrolase</fullName>
    </alternativeName>
    <alternativeName>
        <fullName evidence="1">N-acetylmuramic acid 6-phosphate lyase</fullName>
    </alternativeName>
</protein>